<evidence type="ECO:0000255" key="1">
    <source>
        <dbReference type="HAMAP-Rule" id="MF_01037"/>
    </source>
</evidence>
<accession>Q04KY2</accession>
<gene>
    <name evidence="1" type="primary">trmFO</name>
    <name type="synonym">gid</name>
    <name type="ordered locus">SPD_0833</name>
</gene>
<comment type="function">
    <text evidence="1">Catalyzes the folate-dependent formation of 5-methyl-uridine at position 54 (M-5-U54) in all tRNAs.</text>
</comment>
<comment type="catalytic activity">
    <reaction evidence="1">
        <text>uridine(54) in tRNA + (6R)-5,10-methylene-5,6,7,8-tetrahydrofolate + NADH + H(+) = 5-methyluridine(54) in tRNA + (6S)-5,6,7,8-tetrahydrofolate + NAD(+)</text>
        <dbReference type="Rhea" id="RHEA:16873"/>
        <dbReference type="Rhea" id="RHEA-COMP:10167"/>
        <dbReference type="Rhea" id="RHEA-COMP:10193"/>
        <dbReference type="ChEBI" id="CHEBI:15378"/>
        <dbReference type="ChEBI" id="CHEBI:15636"/>
        <dbReference type="ChEBI" id="CHEBI:57453"/>
        <dbReference type="ChEBI" id="CHEBI:57540"/>
        <dbReference type="ChEBI" id="CHEBI:57945"/>
        <dbReference type="ChEBI" id="CHEBI:65315"/>
        <dbReference type="ChEBI" id="CHEBI:74447"/>
        <dbReference type="EC" id="2.1.1.74"/>
    </reaction>
</comment>
<comment type="catalytic activity">
    <reaction evidence="1">
        <text>uridine(54) in tRNA + (6R)-5,10-methylene-5,6,7,8-tetrahydrofolate + NADPH + H(+) = 5-methyluridine(54) in tRNA + (6S)-5,6,7,8-tetrahydrofolate + NADP(+)</text>
        <dbReference type="Rhea" id="RHEA:62372"/>
        <dbReference type="Rhea" id="RHEA-COMP:10167"/>
        <dbReference type="Rhea" id="RHEA-COMP:10193"/>
        <dbReference type="ChEBI" id="CHEBI:15378"/>
        <dbReference type="ChEBI" id="CHEBI:15636"/>
        <dbReference type="ChEBI" id="CHEBI:57453"/>
        <dbReference type="ChEBI" id="CHEBI:57783"/>
        <dbReference type="ChEBI" id="CHEBI:58349"/>
        <dbReference type="ChEBI" id="CHEBI:65315"/>
        <dbReference type="ChEBI" id="CHEBI:74447"/>
        <dbReference type="EC" id="2.1.1.74"/>
    </reaction>
</comment>
<comment type="cofactor">
    <cofactor evidence="1">
        <name>FAD</name>
        <dbReference type="ChEBI" id="CHEBI:57692"/>
    </cofactor>
</comment>
<comment type="subcellular location">
    <subcellularLocation>
        <location evidence="1">Cytoplasm</location>
    </subcellularLocation>
</comment>
<comment type="similarity">
    <text evidence="1">Belongs to the MnmG family. TrmFO subfamily.</text>
</comment>
<protein>
    <recommendedName>
        <fullName evidence="1">Methylenetetrahydrofolate--tRNA-(uracil-5-)-methyltransferase TrmFO</fullName>
        <ecNumber evidence="1">2.1.1.74</ecNumber>
    </recommendedName>
    <alternativeName>
        <fullName evidence="1">Folate-dependent tRNA (uracil-5-)-methyltransferase</fullName>
    </alternativeName>
    <alternativeName>
        <fullName evidence="1">Folate-dependent tRNA(M-5-U54)-methyltransferase</fullName>
    </alternativeName>
</protein>
<reference key="1">
    <citation type="journal article" date="2007" name="J. Bacteriol.">
        <title>Genome sequence of Avery's virulent serotype 2 strain D39 of Streptococcus pneumoniae and comparison with that of unencapsulated laboratory strain R6.</title>
        <authorList>
            <person name="Lanie J.A."/>
            <person name="Ng W.-L."/>
            <person name="Kazmierczak K.M."/>
            <person name="Andrzejewski T.M."/>
            <person name="Davidsen T.M."/>
            <person name="Wayne K.J."/>
            <person name="Tettelin H."/>
            <person name="Glass J.I."/>
            <person name="Winkler M.E."/>
        </authorList>
    </citation>
    <scope>NUCLEOTIDE SEQUENCE [LARGE SCALE GENOMIC DNA]</scope>
    <source>
        <strain>D39 / NCTC 7466</strain>
    </source>
</reference>
<proteinExistence type="inferred from homology"/>
<feature type="chain" id="PRO_1000063935" description="Methylenetetrahydrofolate--tRNA-(uracil-5-)-methyltransferase TrmFO">
    <location>
        <begin position="1"/>
        <end position="444"/>
    </location>
</feature>
<feature type="binding site" evidence="1">
    <location>
        <begin position="10"/>
        <end position="15"/>
    </location>
    <ligand>
        <name>FAD</name>
        <dbReference type="ChEBI" id="CHEBI:57692"/>
    </ligand>
</feature>
<dbReference type="EC" id="2.1.1.74" evidence="1"/>
<dbReference type="EMBL" id="CP000410">
    <property type="protein sequence ID" value="ABJ54938.1"/>
    <property type="molecule type" value="Genomic_DNA"/>
</dbReference>
<dbReference type="RefSeq" id="WP_000083698.1">
    <property type="nucleotide sequence ID" value="NZ_JAMLJR010000004.1"/>
</dbReference>
<dbReference type="SMR" id="Q04KY2"/>
<dbReference type="PaxDb" id="373153-SPD_0833"/>
<dbReference type="KEGG" id="spd:SPD_0833"/>
<dbReference type="eggNOG" id="COG1206">
    <property type="taxonomic scope" value="Bacteria"/>
</dbReference>
<dbReference type="HOGENOM" id="CLU_033057_1_0_9"/>
<dbReference type="BioCyc" id="SPNE373153:G1G6V-912-MONOMER"/>
<dbReference type="Proteomes" id="UP000001452">
    <property type="component" value="Chromosome"/>
</dbReference>
<dbReference type="GO" id="GO:0005829">
    <property type="term" value="C:cytosol"/>
    <property type="evidence" value="ECO:0007669"/>
    <property type="project" value="TreeGrafter"/>
</dbReference>
<dbReference type="GO" id="GO:0050660">
    <property type="term" value="F:flavin adenine dinucleotide binding"/>
    <property type="evidence" value="ECO:0007669"/>
    <property type="project" value="UniProtKB-UniRule"/>
</dbReference>
<dbReference type="GO" id="GO:0047151">
    <property type="term" value="F:tRNA (uracil(54)-C5)-methyltransferase activity, 5,10-methylenetetrahydrofolate-dependent"/>
    <property type="evidence" value="ECO:0007669"/>
    <property type="project" value="UniProtKB-UniRule"/>
</dbReference>
<dbReference type="GO" id="GO:0030488">
    <property type="term" value="P:tRNA methylation"/>
    <property type="evidence" value="ECO:0007669"/>
    <property type="project" value="TreeGrafter"/>
</dbReference>
<dbReference type="GO" id="GO:0002098">
    <property type="term" value="P:tRNA wobble uridine modification"/>
    <property type="evidence" value="ECO:0007669"/>
    <property type="project" value="TreeGrafter"/>
</dbReference>
<dbReference type="FunFam" id="3.50.50.60:FF:000035">
    <property type="entry name" value="Methylenetetrahydrofolate--tRNA-(uracil-5-)-methyltransferase TrmFO"/>
    <property type="match status" value="1"/>
</dbReference>
<dbReference type="FunFam" id="3.50.50.60:FF:000040">
    <property type="entry name" value="Methylenetetrahydrofolate--tRNA-(uracil-5-)-methyltransferase TrmFO"/>
    <property type="match status" value="1"/>
</dbReference>
<dbReference type="Gene3D" id="3.50.50.60">
    <property type="entry name" value="FAD/NAD(P)-binding domain"/>
    <property type="match status" value="2"/>
</dbReference>
<dbReference type="HAMAP" id="MF_01037">
    <property type="entry name" value="TrmFO"/>
    <property type="match status" value="1"/>
</dbReference>
<dbReference type="InterPro" id="IPR036188">
    <property type="entry name" value="FAD/NAD-bd_sf"/>
</dbReference>
<dbReference type="InterPro" id="IPR002218">
    <property type="entry name" value="MnmG-rel"/>
</dbReference>
<dbReference type="InterPro" id="IPR020595">
    <property type="entry name" value="MnmG-rel_CS"/>
</dbReference>
<dbReference type="InterPro" id="IPR040131">
    <property type="entry name" value="MnmG_N"/>
</dbReference>
<dbReference type="InterPro" id="IPR004417">
    <property type="entry name" value="TrmFO"/>
</dbReference>
<dbReference type="NCBIfam" id="TIGR00137">
    <property type="entry name" value="gid_trmFO"/>
    <property type="match status" value="1"/>
</dbReference>
<dbReference type="NCBIfam" id="NF003739">
    <property type="entry name" value="PRK05335.1"/>
    <property type="match status" value="1"/>
</dbReference>
<dbReference type="PANTHER" id="PTHR11806">
    <property type="entry name" value="GLUCOSE INHIBITED DIVISION PROTEIN A"/>
    <property type="match status" value="1"/>
</dbReference>
<dbReference type="PANTHER" id="PTHR11806:SF2">
    <property type="entry name" value="METHYLENETETRAHYDROFOLATE--TRNA-(URACIL-5-)-METHYLTRANSFERASE TRMFO"/>
    <property type="match status" value="1"/>
</dbReference>
<dbReference type="Pfam" id="PF01134">
    <property type="entry name" value="GIDA"/>
    <property type="match status" value="1"/>
</dbReference>
<dbReference type="SUPFAM" id="SSF51905">
    <property type="entry name" value="FAD/NAD(P)-binding domain"/>
    <property type="match status" value="1"/>
</dbReference>
<dbReference type="PROSITE" id="PS01281">
    <property type="entry name" value="GIDA_2"/>
    <property type="match status" value="1"/>
</dbReference>
<organism>
    <name type="scientific">Streptococcus pneumoniae serotype 2 (strain D39 / NCTC 7466)</name>
    <dbReference type="NCBI Taxonomy" id="373153"/>
    <lineage>
        <taxon>Bacteria</taxon>
        <taxon>Bacillati</taxon>
        <taxon>Bacillota</taxon>
        <taxon>Bacilli</taxon>
        <taxon>Lactobacillales</taxon>
        <taxon>Streptococcaceae</taxon>
        <taxon>Streptococcus</taxon>
    </lineage>
</organism>
<sequence length="444" mass="49287">MSQSYINVIGAGLAGSEAAYQIAERGIPVKLYEMRGVKSTPQHKTDNFAELVCSNSLRGDALTNAVGLLKEEMRRLGSVILESAEATRVPAGGALAVDRDGFSQMVTEKVANHPLIEVVRDEITELPTDVITVIATGPLTSDALAEKIHALNDGDGFYFYDAAAPIIDVNTIDMSKVYLKSRYDKGEAAYLNAPMTKQEFMDFHEALVNAEEAPLNSFEKEKYFEGCMPIEVMAKRGIKTMLYGPMKPVGLEYPDDYTGPRDGEFKTPYAVVQLRQDNAAGSLYNIVGFQTHLKWGEQKRVFQMIPGLENAEFVRYGVMHRNSYMDSPNLLEQTYRSKKQPNLFFAGQMTGVEGYVESAASGLVAGINAARLFKEESEVIFPETTAIGSLAHYITHADSKHFQPMNVNFGIIKELEGERIRDKKARYEKIAERALADLEEFLTV</sequence>
<keyword id="KW-0963">Cytoplasm</keyword>
<keyword id="KW-0274">FAD</keyword>
<keyword id="KW-0285">Flavoprotein</keyword>
<keyword id="KW-0489">Methyltransferase</keyword>
<keyword id="KW-0520">NAD</keyword>
<keyword id="KW-0521">NADP</keyword>
<keyword id="KW-1185">Reference proteome</keyword>
<keyword id="KW-0808">Transferase</keyword>
<keyword id="KW-0819">tRNA processing</keyword>
<name>TRMFO_STRP2</name>